<gene>
    <name type="ORF">GIG44</name>
    <name type="ORF">PP9974</name>
</gene>
<keyword id="KW-1185">Reference proteome</keyword>
<dbReference type="EMBL" id="AF318382">
    <property type="protein sequence ID" value="AAL55889.1"/>
    <property type="molecule type" value="mRNA"/>
</dbReference>
<dbReference type="EMBL" id="AY971350">
    <property type="protein sequence ID" value="AAY40360.1"/>
    <property type="molecule type" value="mRNA"/>
</dbReference>
<dbReference type="EMBL" id="BC011786">
    <property type="status" value="NOT_ANNOTATED_CDS"/>
    <property type="molecule type" value="mRNA"/>
</dbReference>
<dbReference type="EMBL" id="BC042127">
    <property type="status" value="NOT_ANNOTATED_CDS"/>
    <property type="molecule type" value="mRNA"/>
</dbReference>
<dbReference type="EMBL" id="X07868">
    <property type="protein sequence ID" value="CAA30718.1"/>
    <property type="molecule type" value="Genomic_DNA"/>
</dbReference>
<dbReference type="PIR" id="S03384">
    <property type="entry name" value="S03384"/>
</dbReference>
<dbReference type="IntAct" id="P09565">
    <property type="interactions" value="6"/>
</dbReference>
<dbReference type="BioMuta" id="GIG44"/>
<dbReference type="neXtProt" id="NX_P09565"/>
<dbReference type="InParanoid" id="P09565"/>
<dbReference type="PAN-GO" id="P09565">
    <property type="GO annotations" value="0 GO annotations based on evolutionary models"/>
</dbReference>
<dbReference type="PathwayCommons" id="P09565"/>
<dbReference type="Pharos" id="P09565">
    <property type="development level" value="Tdark"/>
</dbReference>
<dbReference type="Proteomes" id="UP000005640">
    <property type="component" value="Unplaced"/>
</dbReference>
<dbReference type="RNAct" id="P09565">
    <property type="molecule type" value="protein"/>
</dbReference>
<organism>
    <name type="scientific">Homo sapiens</name>
    <name type="common">Human</name>
    <dbReference type="NCBI Taxonomy" id="9606"/>
    <lineage>
        <taxon>Eukaryota</taxon>
        <taxon>Metazoa</taxon>
        <taxon>Chordata</taxon>
        <taxon>Craniata</taxon>
        <taxon>Vertebrata</taxon>
        <taxon>Euteleostomi</taxon>
        <taxon>Mammalia</taxon>
        <taxon>Eutheria</taxon>
        <taxon>Euarchontoglires</taxon>
        <taxon>Primates</taxon>
        <taxon>Haplorrhini</taxon>
        <taxon>Catarrhini</taxon>
        <taxon>Hominidae</taxon>
        <taxon>Homo</taxon>
    </lineage>
</organism>
<proteinExistence type="evidence at protein level"/>
<comment type="interaction">
    <interactant intactId="EBI-10196507">
        <id>P09565</id>
    </interactant>
    <interactant intactId="EBI-2115097">
        <id>P07339</id>
        <label>CTSD</label>
    </interactant>
    <organismsDiffer>false</organismsDiffer>
    <experiments>3</experiments>
</comment>
<comment type="interaction">
    <interactant intactId="EBI-10196507">
        <id>P09565</id>
    </interactant>
    <interactant intactId="EBI-747754">
        <id>P28799</id>
        <label>GRN</label>
    </interactant>
    <organismsDiffer>false</organismsDiffer>
    <experiments>3</experiments>
</comment>
<comment type="interaction">
    <interactant intactId="EBI-10196507">
        <id>P09565</id>
    </interactant>
    <interactant intactId="EBI-25860013">
        <id>P28799-2</id>
        <label>GRN</label>
    </interactant>
    <organismsDiffer>false</organismsDiffer>
    <experiments>3</experiments>
</comment>
<comment type="interaction">
    <interactant intactId="EBI-10196507">
        <id>P09565</id>
    </interactant>
    <interactant intactId="EBI-740322">
        <id>Q93062</id>
        <label>RBPMS</label>
    </interactant>
    <organismsDiffer>false</organismsDiffer>
    <experiments>3</experiments>
</comment>
<comment type="interaction">
    <interactant intactId="EBI-10196507">
        <id>P09565</id>
    </interactant>
    <interactant intactId="EBI-372899">
        <id>Q13148</id>
        <label>TARDBP</label>
    </interactant>
    <organismsDiffer>false</organismsDiffer>
    <experiments>6</experiments>
</comment>
<comment type="interaction">
    <interactant intactId="EBI-10196507">
        <id>P09565</id>
    </interactant>
    <interactant intactId="EBI-720609">
        <id>O76024</id>
        <label>WFS1</label>
    </interactant>
    <organismsDiffer>false</organismsDiffer>
    <experiments>3</experiments>
</comment>
<comment type="tissue specificity">
    <text evidence="1">Expressed in fetal and adult liver.</text>
</comment>
<comment type="miscellaneous">
    <text evidence="1">Encoded within 3' untranslated region of IGF2 last exon (exon 7). However, might be transcribed separately. Parallels IGF2 mRNA in its abundance.</text>
</comment>
<feature type="chain" id="PRO_0000084172" description="Putative insulin-like growth factor 2-associated protein">
    <location>
        <begin position="1"/>
        <end position="113"/>
    </location>
</feature>
<feature type="sequence conflict" description="In Ref. 4; CAA30718." evidence="3" ref="4">
    <original>GTC</original>
    <variation>LPV</variation>
    <location>
        <begin position="82"/>
        <end position="84"/>
    </location>
</feature>
<reference key="1">
    <citation type="journal article" date="2004" name="Proc. Natl. Acad. Sci. U.S.A.">
        <title>Large-scale cDNA transfection screening for genes related to cancer development and progression.</title>
        <authorList>
            <person name="Wan D."/>
            <person name="Gong Y."/>
            <person name="Qin W."/>
            <person name="Zhang P."/>
            <person name="Li J."/>
            <person name="Wei L."/>
            <person name="Zhou X."/>
            <person name="Li H."/>
            <person name="Qiu X."/>
            <person name="Zhong F."/>
            <person name="He L."/>
            <person name="Yu J."/>
            <person name="Yao G."/>
            <person name="Jiang H."/>
            <person name="Qian L."/>
            <person name="Yu Y."/>
            <person name="Shu H."/>
            <person name="Chen X."/>
            <person name="Xu H."/>
            <person name="Guo M."/>
            <person name="Pan Z."/>
            <person name="Chen Y."/>
            <person name="Ge C."/>
            <person name="Yang S."/>
            <person name="Gu J."/>
        </authorList>
    </citation>
    <scope>NUCLEOTIDE SEQUENCE [LARGE SCALE MRNA]</scope>
</reference>
<reference key="2">
    <citation type="submission" date="2005-03" db="EMBL/GenBank/DDBJ databases">
        <title>Identification of a human cell growth-inhibiting gene.</title>
        <authorList>
            <person name="Kim J.W."/>
            <person name="Kim H.K."/>
            <person name="Shin S.M."/>
        </authorList>
    </citation>
    <scope>NUCLEOTIDE SEQUENCE [LARGE SCALE MRNA]</scope>
</reference>
<reference key="3">
    <citation type="journal article" date="2004" name="Genome Res.">
        <title>The status, quality, and expansion of the NIH full-length cDNA project: the Mammalian Gene Collection (MGC).</title>
        <authorList>
            <consortium name="The MGC Project Team"/>
        </authorList>
    </citation>
    <scope>NUCLEOTIDE SEQUENCE [LARGE SCALE MRNA]</scope>
    <source>
        <tissue>Brain</tissue>
        <tissue>Muscle</tissue>
    </source>
</reference>
<reference key="4">
    <citation type="journal article" date="1988" name="Biochim. Biophys. Acta">
        <title>Differential expression of the human insulin-like growth factor II gene. Characterization of the IGF-II mRNAs and an mRNA encoding a putative IGF-II-associated protein.</title>
        <authorList>
            <person name="de Pagter-Holthuizen P."/>
            <person name="van der Kammen R.A."/>
            <person name="Jansen M."/>
            <person name="van Schaik F.M.A."/>
            <person name="Sussenbach J.S."/>
        </authorList>
    </citation>
    <scope>NUCLEOTIDE SEQUENCE [GENOMIC DNA] OF 1-84</scope>
    <scope>TISSUE SPECIFICITY</scope>
    <source>
        <tissue>Placenta</tissue>
    </source>
</reference>
<evidence type="ECO:0000269" key="1">
    <source>
    </source>
</evidence>
<evidence type="ECO:0000303" key="2">
    <source>
    </source>
</evidence>
<evidence type="ECO:0000305" key="3"/>
<sequence length="113" mass="12087">MTPGVVHASPPQSQRVPRQAPCEWAIRNIGQKPKEPNCHNCGTHIGLRSKTLRGTPNYLPIRQDTHPPSVIFCLAGVGVPGGTCRPAPCVPRFAALPWATNHPGPGCLSDLRA</sequence>
<name>IG2R_HUMAN</name>
<protein>
    <recommendedName>
        <fullName>Putative insulin-like growth factor 2-associated protein</fullName>
    </recommendedName>
    <alternativeName>
        <fullName>Cell growth-inhibiting gene 44 protein</fullName>
    </alternativeName>
    <alternativeName>
        <fullName evidence="2">Insulin-like growth factor II-associated protein</fullName>
    </alternativeName>
</protein>
<accession>P09565</accession>
<accession>Q96F00</accession>